<proteinExistence type="inferred from homology"/>
<gene>
    <name type="ordered locus">Cphy_3604</name>
</gene>
<reference key="1">
    <citation type="submission" date="2007-11" db="EMBL/GenBank/DDBJ databases">
        <title>Complete genome sequence of Clostridium phytofermentans ISDg.</title>
        <authorList>
            <person name="Leschine S.B."/>
            <person name="Warnick T.A."/>
            <person name="Blanchard J.L."/>
            <person name="Schnell D.J."/>
            <person name="Petit E.L."/>
            <person name="LaTouf W.G."/>
            <person name="Copeland A."/>
            <person name="Lucas S."/>
            <person name="Lapidus A."/>
            <person name="Barry K."/>
            <person name="Glavina del Rio T."/>
            <person name="Dalin E."/>
            <person name="Tice H."/>
            <person name="Pitluck S."/>
            <person name="Kiss H."/>
            <person name="Brettin T."/>
            <person name="Bruce D."/>
            <person name="Detter J.C."/>
            <person name="Han C."/>
            <person name="Kuske C."/>
            <person name="Schmutz J."/>
            <person name="Larimer F."/>
            <person name="Land M."/>
            <person name="Hauser L."/>
            <person name="Kyrpides N."/>
            <person name="Kim E.A."/>
            <person name="Richardson P."/>
        </authorList>
    </citation>
    <scope>NUCLEOTIDE SEQUENCE [LARGE SCALE GENOMIC DNA]</scope>
    <source>
        <strain>ATCC 700394 / DSM 18823 / ISDg</strain>
    </source>
</reference>
<evidence type="ECO:0000255" key="1">
    <source>
        <dbReference type="HAMAP-Rule" id="MF_00707"/>
    </source>
</evidence>
<organism>
    <name type="scientific">Lachnoclostridium phytofermentans (strain ATCC 700394 / DSM 18823 / ISDg)</name>
    <name type="common">Clostridium phytofermentans</name>
    <dbReference type="NCBI Taxonomy" id="357809"/>
    <lineage>
        <taxon>Bacteria</taxon>
        <taxon>Bacillati</taxon>
        <taxon>Bacillota</taxon>
        <taxon>Clostridia</taxon>
        <taxon>Lachnospirales</taxon>
        <taxon>Lachnospiraceae</taxon>
    </lineage>
</organism>
<dbReference type="EMBL" id="CP000885">
    <property type="protein sequence ID" value="ABX43951.1"/>
    <property type="molecule type" value="Genomic_DNA"/>
</dbReference>
<dbReference type="RefSeq" id="WP_012201599.1">
    <property type="nucleotide sequence ID" value="NC_010001.1"/>
</dbReference>
<dbReference type="STRING" id="357809.Cphy_3604"/>
<dbReference type="KEGG" id="cpy:Cphy_3604"/>
<dbReference type="eggNOG" id="COG4492">
    <property type="taxonomic scope" value="Bacteria"/>
</dbReference>
<dbReference type="HOGENOM" id="CLU_128147_0_0_9"/>
<dbReference type="OrthoDB" id="9788773at2"/>
<dbReference type="Proteomes" id="UP000000370">
    <property type="component" value="Chromosome"/>
</dbReference>
<dbReference type="HAMAP" id="MF_00707">
    <property type="entry name" value="UPF0735"/>
    <property type="match status" value="1"/>
</dbReference>
<dbReference type="InterPro" id="IPR045865">
    <property type="entry name" value="ACT-like_dom_sf"/>
</dbReference>
<dbReference type="InterPro" id="IPR002912">
    <property type="entry name" value="ACT_dom"/>
</dbReference>
<dbReference type="InterPro" id="IPR008310">
    <property type="entry name" value="UPF0735_ACT_dom-cont"/>
</dbReference>
<dbReference type="NCBIfam" id="NF003361">
    <property type="entry name" value="PRK04435.1"/>
    <property type="match status" value="1"/>
</dbReference>
<dbReference type="PIRSF" id="PIRSF025624">
    <property type="entry name" value="ACT_PheB"/>
    <property type="match status" value="1"/>
</dbReference>
<dbReference type="SUPFAM" id="SSF55021">
    <property type="entry name" value="ACT-like"/>
    <property type="match status" value="1"/>
</dbReference>
<dbReference type="PROSITE" id="PS51671">
    <property type="entry name" value="ACT"/>
    <property type="match status" value="1"/>
</dbReference>
<sequence length="146" mass="16522">MDDEKYYIVKKKALPEVLLKVVEAKRLLDSERVMTIQEATDAVDISRSSFYKYKDDIFPFHENNRGKTITFMLQMDDIPGLLSMVLNQIAKSNANVLTIHQTIPIGGIASLTLGIEILPQTLELSQMLESIEALDGIHYLKILGRE</sequence>
<comment type="similarity">
    <text evidence="1">Belongs to the UPF0735 family.</text>
</comment>
<feature type="chain" id="PRO_0000366309" description="UPF0735 ACT domain-containing protein Cphy_3604">
    <location>
        <begin position="1"/>
        <end position="146"/>
    </location>
</feature>
<feature type="domain" description="ACT" evidence="1">
    <location>
        <begin position="70"/>
        <end position="145"/>
    </location>
</feature>
<accession>A9KIT8</accession>
<keyword id="KW-1185">Reference proteome</keyword>
<protein>
    <recommendedName>
        <fullName evidence="1">UPF0735 ACT domain-containing protein Cphy_3604</fullName>
    </recommendedName>
</protein>
<name>Y3604_LACP7</name>